<reference key="1">
    <citation type="journal article" date="2000" name="DNA Res.">
        <title>Structural analysis of Arabidopsis thaliana chromosome 3. I. Sequence features of the regions of 4,504,864 bp covered by sixty P1 and TAC clones.</title>
        <authorList>
            <person name="Sato S."/>
            <person name="Nakamura Y."/>
            <person name="Kaneko T."/>
            <person name="Katoh T."/>
            <person name="Asamizu E."/>
            <person name="Tabata S."/>
        </authorList>
    </citation>
    <scope>NUCLEOTIDE SEQUENCE [LARGE SCALE GENOMIC DNA]</scope>
    <source>
        <strain>cv. Columbia</strain>
    </source>
</reference>
<reference key="2">
    <citation type="journal article" date="2017" name="Plant J.">
        <title>Araport11: a complete reannotation of the Arabidopsis thaliana reference genome.</title>
        <authorList>
            <person name="Cheng C.Y."/>
            <person name="Krishnakumar V."/>
            <person name="Chan A.P."/>
            <person name="Thibaud-Nissen F."/>
            <person name="Schobel S."/>
            <person name="Town C.D."/>
        </authorList>
    </citation>
    <scope>GENOME REANNOTATION</scope>
    <source>
        <strain>cv. Columbia</strain>
    </source>
</reference>
<reference key="3">
    <citation type="journal article" date="2003" name="Science">
        <title>Empirical analysis of transcriptional activity in the Arabidopsis genome.</title>
        <authorList>
            <person name="Yamada K."/>
            <person name="Lim J."/>
            <person name="Dale J.M."/>
            <person name="Chen H."/>
            <person name="Shinn P."/>
            <person name="Palm C.J."/>
            <person name="Southwick A.M."/>
            <person name="Wu H.C."/>
            <person name="Kim C.J."/>
            <person name="Nguyen M."/>
            <person name="Pham P.K."/>
            <person name="Cheuk R.F."/>
            <person name="Karlin-Newmann G."/>
            <person name="Liu S.X."/>
            <person name="Lam B."/>
            <person name="Sakano H."/>
            <person name="Wu T."/>
            <person name="Yu G."/>
            <person name="Miranda M."/>
            <person name="Quach H.L."/>
            <person name="Tripp M."/>
            <person name="Chang C.H."/>
            <person name="Lee J.M."/>
            <person name="Toriumi M.J."/>
            <person name="Chan M.M."/>
            <person name="Tang C.C."/>
            <person name="Onodera C.S."/>
            <person name="Deng J.M."/>
            <person name="Akiyama K."/>
            <person name="Ansari Y."/>
            <person name="Arakawa T."/>
            <person name="Banh J."/>
            <person name="Banno F."/>
            <person name="Bowser L."/>
            <person name="Brooks S.Y."/>
            <person name="Carninci P."/>
            <person name="Chao Q."/>
            <person name="Choy N."/>
            <person name="Enju A."/>
            <person name="Goldsmith A.D."/>
            <person name="Gurjal M."/>
            <person name="Hansen N.F."/>
            <person name="Hayashizaki Y."/>
            <person name="Johnson-Hopson C."/>
            <person name="Hsuan V.W."/>
            <person name="Iida K."/>
            <person name="Karnes M."/>
            <person name="Khan S."/>
            <person name="Koesema E."/>
            <person name="Ishida J."/>
            <person name="Jiang P.X."/>
            <person name="Jones T."/>
            <person name="Kawai J."/>
            <person name="Kamiya A."/>
            <person name="Meyers C."/>
            <person name="Nakajima M."/>
            <person name="Narusaka M."/>
            <person name="Seki M."/>
            <person name="Sakurai T."/>
            <person name="Satou M."/>
            <person name="Tamse R."/>
            <person name="Vaysberg M."/>
            <person name="Wallender E.K."/>
            <person name="Wong C."/>
            <person name="Yamamura Y."/>
            <person name="Yuan S."/>
            <person name="Shinozaki K."/>
            <person name="Davis R.W."/>
            <person name="Theologis A."/>
            <person name="Ecker J.R."/>
        </authorList>
    </citation>
    <scope>NUCLEOTIDE SEQUENCE [LARGE SCALE MRNA]</scope>
    <source>
        <strain>cv. Columbia</strain>
    </source>
</reference>
<reference key="4">
    <citation type="journal article" date="2001" name="J. Biol. Chem.">
        <title>Phylogenetic analysis of the UDP-glycosyltransferase multigene family of Arabidopsis thaliana.</title>
        <authorList>
            <person name="Li Y."/>
            <person name="Baldauf S."/>
            <person name="Lim E.K."/>
            <person name="Bowles D.J."/>
        </authorList>
    </citation>
    <scope>GENE FAMILY</scope>
</reference>
<reference key="5">
    <citation type="journal article" date="2007" name="Nat. Chem. Biol.">
        <title>Chemical genetic interrogation of natural variation uncovers a molecule that is glycoactivated.</title>
        <authorList>
            <person name="Zhao Y."/>
            <person name="Chow T.F."/>
            <person name="Puckrin R.S."/>
            <person name="Alfred S.E."/>
            <person name="Korir A.K."/>
            <person name="Larive C.K."/>
            <person name="Cutler S.R."/>
        </authorList>
    </citation>
    <scope>FUNCTION</scope>
    <scope>DISRUPTION PHENOTYPE</scope>
    <scope>MUTAGENESIS OF HIS-26</scope>
</reference>
<protein>
    <recommendedName>
        <fullName>UDP-glycosyltransferase 71B2</fullName>
        <ecNumber>2.4.1.-</ecNumber>
    </recommendedName>
    <alternativeName>
        <fullName>Protein HYPOSTATIN RESISTANCE 1</fullName>
    </alternativeName>
</protein>
<name>U71B2_ARATH</name>
<dbReference type="EC" id="2.4.1.-"/>
<dbReference type="EMBL" id="AB025634">
    <property type="protein sequence ID" value="BAB02838.1"/>
    <property type="molecule type" value="Genomic_DNA"/>
</dbReference>
<dbReference type="EMBL" id="CP002686">
    <property type="protein sequence ID" value="AEE76549.1"/>
    <property type="molecule type" value="Genomic_DNA"/>
</dbReference>
<dbReference type="EMBL" id="AF372973">
    <property type="protein sequence ID" value="AAK50110.1"/>
    <property type="molecule type" value="mRNA"/>
</dbReference>
<dbReference type="EMBL" id="AF428321">
    <property type="protein sequence ID" value="AAL16251.1"/>
    <property type="molecule type" value="mRNA"/>
</dbReference>
<dbReference type="EMBL" id="AY140044">
    <property type="protein sequence ID" value="AAM98185.1"/>
    <property type="molecule type" value="mRNA"/>
</dbReference>
<dbReference type="EMBL" id="AY143906">
    <property type="protein sequence ID" value="AAN28845.1"/>
    <property type="molecule type" value="mRNA"/>
</dbReference>
<dbReference type="RefSeq" id="NP_188813.1">
    <property type="nucleotide sequence ID" value="NM_113071.2"/>
</dbReference>
<dbReference type="SMR" id="Q9LSY8"/>
<dbReference type="FunCoup" id="Q9LSY8">
    <property type="interactions" value="398"/>
</dbReference>
<dbReference type="STRING" id="3702.Q9LSY8"/>
<dbReference type="CAZy" id="GT1">
    <property type="family name" value="Glycosyltransferase Family 1"/>
</dbReference>
<dbReference type="PaxDb" id="3702-AT3G21760.1"/>
<dbReference type="ProteomicsDB" id="228559"/>
<dbReference type="EnsemblPlants" id="AT3G21760.1">
    <property type="protein sequence ID" value="AT3G21760.1"/>
    <property type="gene ID" value="AT3G21760"/>
</dbReference>
<dbReference type="GeneID" id="821730"/>
<dbReference type="Gramene" id="AT3G21760.1">
    <property type="protein sequence ID" value="AT3G21760.1"/>
    <property type="gene ID" value="AT3G21760"/>
</dbReference>
<dbReference type="KEGG" id="ath:AT3G21760"/>
<dbReference type="Araport" id="AT3G21760"/>
<dbReference type="TAIR" id="AT3G21760">
    <property type="gene designation" value="HYR1"/>
</dbReference>
<dbReference type="eggNOG" id="KOG1192">
    <property type="taxonomic scope" value="Eukaryota"/>
</dbReference>
<dbReference type="HOGENOM" id="CLU_001724_3_2_1"/>
<dbReference type="InParanoid" id="Q9LSY8"/>
<dbReference type="OMA" id="YKATAYI"/>
<dbReference type="PhylomeDB" id="Q9LSY8"/>
<dbReference type="BioCyc" id="ARA:AT3G21760-MONOMER"/>
<dbReference type="PRO" id="PR:Q9LSY8"/>
<dbReference type="Proteomes" id="UP000006548">
    <property type="component" value="Chromosome 3"/>
</dbReference>
<dbReference type="ExpressionAtlas" id="Q9LSY8">
    <property type="expression patterns" value="baseline and differential"/>
</dbReference>
<dbReference type="GO" id="GO:0035251">
    <property type="term" value="F:UDP-glucosyltransferase activity"/>
    <property type="evidence" value="ECO:0007669"/>
    <property type="project" value="InterPro"/>
</dbReference>
<dbReference type="GO" id="GO:0008194">
    <property type="term" value="F:UDP-glycosyltransferase activity"/>
    <property type="evidence" value="ECO:0000314"/>
    <property type="project" value="TAIR"/>
</dbReference>
<dbReference type="CDD" id="cd03784">
    <property type="entry name" value="GT1_Gtf-like"/>
    <property type="match status" value="1"/>
</dbReference>
<dbReference type="FunFam" id="3.40.50.2000:FF:000056">
    <property type="entry name" value="Glycosyltransferase"/>
    <property type="match status" value="1"/>
</dbReference>
<dbReference type="FunFam" id="3.40.50.2000:FF:000080">
    <property type="entry name" value="Glycosyltransferase"/>
    <property type="match status" value="1"/>
</dbReference>
<dbReference type="Gene3D" id="3.40.50.2000">
    <property type="entry name" value="Glycogen Phosphorylase B"/>
    <property type="match status" value="2"/>
</dbReference>
<dbReference type="InterPro" id="IPR050481">
    <property type="entry name" value="UDP-glycosyltransf_plant"/>
</dbReference>
<dbReference type="InterPro" id="IPR002213">
    <property type="entry name" value="UDP_glucos_trans"/>
</dbReference>
<dbReference type="InterPro" id="IPR035595">
    <property type="entry name" value="UDP_glycos_trans_CS"/>
</dbReference>
<dbReference type="PANTHER" id="PTHR48048">
    <property type="entry name" value="GLYCOSYLTRANSFERASE"/>
    <property type="match status" value="1"/>
</dbReference>
<dbReference type="PANTHER" id="PTHR48048:SF45">
    <property type="entry name" value="GLYCOSYLTRANSFERASE"/>
    <property type="match status" value="1"/>
</dbReference>
<dbReference type="Pfam" id="PF00201">
    <property type="entry name" value="UDPGT"/>
    <property type="match status" value="1"/>
</dbReference>
<dbReference type="SUPFAM" id="SSF53756">
    <property type="entry name" value="UDP-Glycosyltransferase/glycogen phosphorylase"/>
    <property type="match status" value="1"/>
</dbReference>
<dbReference type="PROSITE" id="PS00375">
    <property type="entry name" value="UDPGT"/>
    <property type="match status" value="1"/>
</dbReference>
<evidence type="ECO:0000250" key="1"/>
<evidence type="ECO:0000269" key="2">
    <source>
    </source>
</evidence>
<evidence type="ECO:0000305" key="3"/>
<feature type="chain" id="PRO_0000409048" description="UDP-glycosyltransferase 71B2">
    <location>
        <begin position="1"/>
        <end position="485"/>
    </location>
</feature>
<feature type="binding site" evidence="1">
    <location>
        <position position="287"/>
    </location>
    <ligand>
        <name>UDP-alpha-D-glucose</name>
        <dbReference type="ChEBI" id="CHEBI:58885"/>
    </ligand>
</feature>
<feature type="binding site" evidence="1">
    <location>
        <begin position="354"/>
        <end position="356"/>
    </location>
    <ligand>
        <name>UDP-alpha-D-glucose</name>
        <dbReference type="ChEBI" id="CHEBI:58885"/>
    </ligand>
</feature>
<feature type="binding site" evidence="1">
    <location>
        <begin position="371"/>
        <end position="379"/>
    </location>
    <ligand>
        <name>UDP-alpha-D-glucose</name>
        <dbReference type="ChEBI" id="CHEBI:58885"/>
    </ligand>
</feature>
<feature type="binding site" evidence="1">
    <location>
        <begin position="393"/>
        <end position="396"/>
    </location>
    <ligand>
        <name>UDP-alpha-D-glucose</name>
        <dbReference type="ChEBI" id="CHEBI:58885"/>
    </ligand>
</feature>
<feature type="mutagenesis site" description="In hyr1; resistance to hypostatin." evidence="2">
    <original>H</original>
    <variation>L</variation>
    <location>
        <position position="26"/>
    </location>
</feature>
<organism>
    <name type="scientific">Arabidopsis thaliana</name>
    <name type="common">Mouse-ear cress</name>
    <dbReference type="NCBI Taxonomy" id="3702"/>
    <lineage>
        <taxon>Eukaryota</taxon>
        <taxon>Viridiplantae</taxon>
        <taxon>Streptophyta</taxon>
        <taxon>Embryophyta</taxon>
        <taxon>Tracheophyta</taxon>
        <taxon>Spermatophyta</taxon>
        <taxon>Magnoliopsida</taxon>
        <taxon>eudicotyledons</taxon>
        <taxon>Gunneridae</taxon>
        <taxon>Pentapetalae</taxon>
        <taxon>rosids</taxon>
        <taxon>malvids</taxon>
        <taxon>Brassicales</taxon>
        <taxon>Brassicaceae</taxon>
        <taxon>Camelineae</taxon>
        <taxon>Arabidopsis</taxon>
    </lineage>
</organism>
<gene>
    <name type="primary">UGT71B2</name>
    <name type="synonym">HYR1</name>
    <name type="ordered locus">At3g21760</name>
    <name type="ORF">MSD21.7</name>
    <name type="ORF">MSD21.9</name>
</gene>
<keyword id="KW-0328">Glycosyltransferase</keyword>
<keyword id="KW-1185">Reference proteome</keyword>
<keyword id="KW-0808">Transferase</keyword>
<proteinExistence type="evidence at protein level"/>
<sequence length="485" mass="54342">MKLELVFIPSPGDGHLRPLVEVAKLHVDRDDHLSITIIIIPQMHGFSSSNSSSYIASLSSDSEERLSYNVLSVPDKPDSDDTKPHFFDYIDNFKPQVKATVEKLTDPGPPDSPSRLAGFVVDMFCMMMIDVANEFGVPSYMFYTSNATFLGLQVHVEYLYDVKNYDVSDLKDSDTTELEVPCLTRPLPVKCFPSVLLTKEWLPVMFRQTRRFRETKGILVNTFAELEPQAMKFFSGVDSPLPTVYTVGPVMNLKINGPNSSDDKQSEILRWLDEQPRKSVVFLCFGSMGGFREGQAKEIAIALERSGHRFVWSLRRAQPKGSIGPPEEFTNLEEILPEGFLERTAEIGKIVGWAPQSAILANPAIGGFVSHCGWNSTLESLWFGVPMATWPLYAEQQVNAFEMVEELGLAVEVRNSFRGDFMAADDELMTAEEIERGIRCLMEQDSDVRSRVKEMSEKSHVALMDGGSSHVALLKFIQDVTKNIS</sequence>
<comment type="function">
    <text evidence="2">Glucosyltransferase that glucosylates the cell wall inhibitor hypostatin in vivo to form a bioactive glucoside.</text>
</comment>
<comment type="disruption phenotype">
    <text evidence="2">No visible phenotype under normal growth condition, but resistance to hypostatin treatment.</text>
</comment>
<comment type="similarity">
    <text evidence="3">Belongs to the UDP-glycosyltransferase family.</text>
</comment>
<accession>Q9LSY8</accession>